<name>NUOK_XANOM</name>
<evidence type="ECO:0000255" key="1">
    <source>
        <dbReference type="HAMAP-Rule" id="MF_01456"/>
    </source>
</evidence>
<gene>
    <name evidence="1" type="primary">nuoK</name>
    <name type="ordered locus">XOO3057</name>
</gene>
<accession>Q2P0W5</accession>
<proteinExistence type="inferred from homology"/>
<reference key="1">
    <citation type="journal article" date="2005" name="Jpn. Agric. Res. Q.">
        <title>Genome sequence of Xanthomonas oryzae pv. oryzae suggests contribution of large numbers of effector genes and insertion sequences to its race diversity.</title>
        <authorList>
            <person name="Ochiai H."/>
            <person name="Inoue Y."/>
            <person name="Takeya M."/>
            <person name="Sasaki A."/>
            <person name="Kaku H."/>
        </authorList>
    </citation>
    <scope>NUCLEOTIDE SEQUENCE [LARGE SCALE GENOMIC DNA]</scope>
    <source>
        <strain>MAFF 311018</strain>
    </source>
</reference>
<dbReference type="EC" id="7.1.1.-" evidence="1"/>
<dbReference type="EMBL" id="AP008229">
    <property type="protein sequence ID" value="BAE69812.1"/>
    <property type="molecule type" value="Genomic_DNA"/>
</dbReference>
<dbReference type="RefSeq" id="WP_005914274.1">
    <property type="nucleotide sequence ID" value="NC_007705.1"/>
</dbReference>
<dbReference type="SMR" id="Q2P0W5"/>
<dbReference type="GeneID" id="97510981"/>
<dbReference type="KEGG" id="xom:XOO3057"/>
<dbReference type="HOGENOM" id="CLU_144724_2_0_6"/>
<dbReference type="GO" id="GO:0030964">
    <property type="term" value="C:NADH dehydrogenase complex"/>
    <property type="evidence" value="ECO:0007669"/>
    <property type="project" value="TreeGrafter"/>
</dbReference>
<dbReference type="GO" id="GO:0005886">
    <property type="term" value="C:plasma membrane"/>
    <property type="evidence" value="ECO:0007669"/>
    <property type="project" value="UniProtKB-SubCell"/>
</dbReference>
<dbReference type="GO" id="GO:0050136">
    <property type="term" value="F:NADH:ubiquinone reductase (non-electrogenic) activity"/>
    <property type="evidence" value="ECO:0007669"/>
    <property type="project" value="UniProtKB-UniRule"/>
</dbReference>
<dbReference type="GO" id="GO:0048038">
    <property type="term" value="F:quinone binding"/>
    <property type="evidence" value="ECO:0007669"/>
    <property type="project" value="UniProtKB-KW"/>
</dbReference>
<dbReference type="GO" id="GO:0042773">
    <property type="term" value="P:ATP synthesis coupled electron transport"/>
    <property type="evidence" value="ECO:0007669"/>
    <property type="project" value="InterPro"/>
</dbReference>
<dbReference type="FunFam" id="1.10.287.3510:FF:000001">
    <property type="entry name" value="NADH-quinone oxidoreductase subunit K"/>
    <property type="match status" value="1"/>
</dbReference>
<dbReference type="Gene3D" id="1.10.287.3510">
    <property type="match status" value="1"/>
</dbReference>
<dbReference type="HAMAP" id="MF_01456">
    <property type="entry name" value="NDH1_NuoK"/>
    <property type="match status" value="1"/>
</dbReference>
<dbReference type="InterPro" id="IPR001133">
    <property type="entry name" value="NADH_UbQ_OxRdtase_chain4L/K"/>
</dbReference>
<dbReference type="InterPro" id="IPR039428">
    <property type="entry name" value="NUOK/Mnh_C1-like"/>
</dbReference>
<dbReference type="NCBIfam" id="NF004320">
    <property type="entry name" value="PRK05715.1-2"/>
    <property type="match status" value="1"/>
</dbReference>
<dbReference type="NCBIfam" id="NF004321">
    <property type="entry name" value="PRK05715.1-3"/>
    <property type="match status" value="1"/>
</dbReference>
<dbReference type="NCBIfam" id="NF004323">
    <property type="entry name" value="PRK05715.1-5"/>
    <property type="match status" value="1"/>
</dbReference>
<dbReference type="PANTHER" id="PTHR11434:SF21">
    <property type="entry name" value="NADH DEHYDROGENASE SUBUNIT 4L-RELATED"/>
    <property type="match status" value="1"/>
</dbReference>
<dbReference type="PANTHER" id="PTHR11434">
    <property type="entry name" value="NADH-UBIQUINONE OXIDOREDUCTASE SUBUNIT ND4L"/>
    <property type="match status" value="1"/>
</dbReference>
<dbReference type="Pfam" id="PF00420">
    <property type="entry name" value="Oxidored_q2"/>
    <property type="match status" value="1"/>
</dbReference>
<keyword id="KW-0997">Cell inner membrane</keyword>
<keyword id="KW-1003">Cell membrane</keyword>
<keyword id="KW-0472">Membrane</keyword>
<keyword id="KW-0520">NAD</keyword>
<keyword id="KW-0874">Quinone</keyword>
<keyword id="KW-1278">Translocase</keyword>
<keyword id="KW-0812">Transmembrane</keyword>
<keyword id="KW-1133">Transmembrane helix</keyword>
<keyword id="KW-0813">Transport</keyword>
<keyword id="KW-0830">Ubiquinone</keyword>
<organism>
    <name type="scientific">Xanthomonas oryzae pv. oryzae (strain MAFF 311018)</name>
    <dbReference type="NCBI Taxonomy" id="342109"/>
    <lineage>
        <taxon>Bacteria</taxon>
        <taxon>Pseudomonadati</taxon>
        <taxon>Pseudomonadota</taxon>
        <taxon>Gammaproteobacteria</taxon>
        <taxon>Lysobacterales</taxon>
        <taxon>Lysobacteraceae</taxon>
        <taxon>Xanthomonas</taxon>
    </lineage>
</organism>
<feature type="chain" id="PRO_0000390278" description="NADH-quinone oxidoreductase subunit K">
    <location>
        <begin position="1"/>
        <end position="101"/>
    </location>
</feature>
<feature type="transmembrane region" description="Helical" evidence="1">
    <location>
        <begin position="4"/>
        <end position="24"/>
    </location>
</feature>
<feature type="transmembrane region" description="Helical" evidence="1">
    <location>
        <begin position="30"/>
        <end position="50"/>
    </location>
</feature>
<feature type="transmembrane region" description="Helical" evidence="1">
    <location>
        <begin position="62"/>
        <end position="82"/>
    </location>
</feature>
<comment type="function">
    <text evidence="1">NDH-1 shuttles electrons from NADH, via FMN and iron-sulfur (Fe-S) centers, to quinones in the respiratory chain. The immediate electron acceptor for the enzyme in this species is believed to be ubiquinone. Couples the redox reaction to proton translocation (for every two electrons transferred, four hydrogen ions are translocated across the cytoplasmic membrane), and thus conserves the redox energy in a proton gradient.</text>
</comment>
<comment type="catalytic activity">
    <reaction evidence="1">
        <text>a quinone + NADH + 5 H(+)(in) = a quinol + NAD(+) + 4 H(+)(out)</text>
        <dbReference type="Rhea" id="RHEA:57888"/>
        <dbReference type="ChEBI" id="CHEBI:15378"/>
        <dbReference type="ChEBI" id="CHEBI:24646"/>
        <dbReference type="ChEBI" id="CHEBI:57540"/>
        <dbReference type="ChEBI" id="CHEBI:57945"/>
        <dbReference type="ChEBI" id="CHEBI:132124"/>
    </reaction>
</comment>
<comment type="subunit">
    <text evidence="1">NDH-1 is composed of 14 different subunits. Subunits NuoA, H, J, K, L, M, N constitute the membrane sector of the complex.</text>
</comment>
<comment type="subcellular location">
    <subcellularLocation>
        <location evidence="1">Cell inner membrane</location>
        <topology evidence="1">Multi-pass membrane protein</topology>
    </subcellularLocation>
</comment>
<comment type="similarity">
    <text evidence="1">Belongs to the complex I subunit 4L family.</text>
</comment>
<sequence length="101" mass="10879">MITLGHLLGLGAVLFCISLAGIFLNRKNVIVLLMSIELMLLSVNVNFIAFSRELGDTAGQLFVFFILTVAAAEAAIGLAILVTLFRTRRTINVAEVDTLKG</sequence>
<protein>
    <recommendedName>
        <fullName evidence="1">NADH-quinone oxidoreductase subunit K</fullName>
        <ecNumber evidence="1">7.1.1.-</ecNumber>
    </recommendedName>
    <alternativeName>
        <fullName evidence="1">NADH dehydrogenase I subunit K</fullName>
    </alternativeName>
    <alternativeName>
        <fullName evidence="1">NDH-1 subunit K</fullName>
    </alternativeName>
</protein>